<accession>A2BP94</accession>
<feature type="chain" id="PRO_0000362719" description="NAD(P)H-quinone oxidoreductase subunit 3">
    <location>
        <begin position="1"/>
        <end position="120"/>
    </location>
</feature>
<feature type="transmembrane region" description="Helical" evidence="1">
    <location>
        <begin position="10"/>
        <end position="30"/>
    </location>
</feature>
<feature type="transmembrane region" description="Helical" evidence="1">
    <location>
        <begin position="64"/>
        <end position="84"/>
    </location>
</feature>
<feature type="transmembrane region" description="Helical" evidence="1">
    <location>
        <begin position="89"/>
        <end position="109"/>
    </location>
</feature>
<protein>
    <recommendedName>
        <fullName evidence="1">NAD(P)H-quinone oxidoreductase subunit 3</fullName>
        <ecNumber evidence="1">7.1.1.-</ecNumber>
    </recommendedName>
    <alternativeName>
        <fullName evidence="1">NAD(P)H dehydrogenase subunit 3</fullName>
    </alternativeName>
    <alternativeName>
        <fullName evidence="1">NADH-plastoquinone oxidoreductase subunit 3</fullName>
    </alternativeName>
    <alternativeName>
        <fullName evidence="1">NDH-1 subunit 3</fullName>
        <shortName evidence="1">NDH-C</shortName>
    </alternativeName>
</protein>
<organism>
    <name type="scientific">Prochlorococcus marinus (strain AS9601)</name>
    <dbReference type="NCBI Taxonomy" id="146891"/>
    <lineage>
        <taxon>Bacteria</taxon>
        <taxon>Bacillati</taxon>
        <taxon>Cyanobacteriota</taxon>
        <taxon>Cyanophyceae</taxon>
        <taxon>Synechococcales</taxon>
        <taxon>Prochlorococcaceae</taxon>
        <taxon>Prochlorococcus</taxon>
    </lineage>
</organism>
<gene>
    <name evidence="1" type="primary">ndhC</name>
    <name type="ordered locus">A9601_03171</name>
</gene>
<proteinExistence type="inferred from homology"/>
<keyword id="KW-0472">Membrane</keyword>
<keyword id="KW-0520">NAD</keyword>
<keyword id="KW-0521">NADP</keyword>
<keyword id="KW-0618">Plastoquinone</keyword>
<keyword id="KW-0874">Quinone</keyword>
<keyword id="KW-0793">Thylakoid</keyword>
<keyword id="KW-1278">Translocase</keyword>
<keyword id="KW-0812">Transmembrane</keyword>
<keyword id="KW-1133">Transmembrane helix</keyword>
<keyword id="KW-0813">Transport</keyword>
<comment type="function">
    <text evidence="1">NDH-1 shuttles electrons from an unknown electron donor, via FMN and iron-sulfur (Fe-S) centers, to quinones in the respiratory and/or the photosynthetic chain. The immediate electron acceptor for the enzyme in this species is believed to be plastoquinone. Couples the redox reaction to proton translocation, and thus conserves the redox energy in a proton gradient. Cyanobacterial NDH-1 also plays a role in inorganic carbon-concentration.</text>
</comment>
<comment type="catalytic activity">
    <reaction evidence="1">
        <text>a plastoquinone + NADH + (n+1) H(+)(in) = a plastoquinol + NAD(+) + n H(+)(out)</text>
        <dbReference type="Rhea" id="RHEA:42608"/>
        <dbReference type="Rhea" id="RHEA-COMP:9561"/>
        <dbReference type="Rhea" id="RHEA-COMP:9562"/>
        <dbReference type="ChEBI" id="CHEBI:15378"/>
        <dbReference type="ChEBI" id="CHEBI:17757"/>
        <dbReference type="ChEBI" id="CHEBI:57540"/>
        <dbReference type="ChEBI" id="CHEBI:57945"/>
        <dbReference type="ChEBI" id="CHEBI:62192"/>
    </reaction>
</comment>
<comment type="catalytic activity">
    <reaction evidence="1">
        <text>a plastoquinone + NADPH + (n+1) H(+)(in) = a plastoquinol + NADP(+) + n H(+)(out)</text>
        <dbReference type="Rhea" id="RHEA:42612"/>
        <dbReference type="Rhea" id="RHEA-COMP:9561"/>
        <dbReference type="Rhea" id="RHEA-COMP:9562"/>
        <dbReference type="ChEBI" id="CHEBI:15378"/>
        <dbReference type="ChEBI" id="CHEBI:17757"/>
        <dbReference type="ChEBI" id="CHEBI:57783"/>
        <dbReference type="ChEBI" id="CHEBI:58349"/>
        <dbReference type="ChEBI" id="CHEBI:62192"/>
    </reaction>
</comment>
<comment type="subunit">
    <text evidence="1">NDH-1 can be composed of about 15 different subunits; different subcomplexes with different compositions have been identified which probably have different functions.</text>
</comment>
<comment type="subcellular location">
    <subcellularLocation>
        <location evidence="1">Cellular thylakoid membrane</location>
        <topology evidence="1">Multi-pass membrane protein</topology>
    </subcellularLocation>
</comment>
<comment type="similarity">
    <text evidence="1">Belongs to the complex I subunit 3 family.</text>
</comment>
<name>NU3C_PROMS</name>
<sequence>MFLLTGYEYFLGFLLIAAAVPVLALVTNLIVAPKGRTGERKLTYESGMEPIGGAWIQFNIRYYMFALVFVIFDVETVFLYPWAVAFNRLGLLAFIEALIFIAILVIALAYAWRKGALEWS</sequence>
<dbReference type="EC" id="7.1.1.-" evidence="1"/>
<dbReference type="EMBL" id="CP000551">
    <property type="protein sequence ID" value="ABM69605.1"/>
    <property type="molecule type" value="Genomic_DNA"/>
</dbReference>
<dbReference type="RefSeq" id="WP_011817786.1">
    <property type="nucleotide sequence ID" value="NC_008816.1"/>
</dbReference>
<dbReference type="SMR" id="A2BP94"/>
<dbReference type="STRING" id="146891.A9601_03171"/>
<dbReference type="KEGG" id="pmb:A9601_03171"/>
<dbReference type="eggNOG" id="COG0838">
    <property type="taxonomic scope" value="Bacteria"/>
</dbReference>
<dbReference type="HOGENOM" id="CLU_119549_1_1_3"/>
<dbReference type="OrthoDB" id="9791970at2"/>
<dbReference type="Proteomes" id="UP000002590">
    <property type="component" value="Chromosome"/>
</dbReference>
<dbReference type="GO" id="GO:0030964">
    <property type="term" value="C:NADH dehydrogenase complex"/>
    <property type="evidence" value="ECO:0007669"/>
    <property type="project" value="TreeGrafter"/>
</dbReference>
<dbReference type="GO" id="GO:0031676">
    <property type="term" value="C:plasma membrane-derived thylakoid membrane"/>
    <property type="evidence" value="ECO:0007669"/>
    <property type="project" value="UniProtKB-SubCell"/>
</dbReference>
<dbReference type="GO" id="GO:0008137">
    <property type="term" value="F:NADH dehydrogenase (ubiquinone) activity"/>
    <property type="evidence" value="ECO:0007669"/>
    <property type="project" value="InterPro"/>
</dbReference>
<dbReference type="GO" id="GO:0048038">
    <property type="term" value="F:quinone binding"/>
    <property type="evidence" value="ECO:0007669"/>
    <property type="project" value="UniProtKB-KW"/>
</dbReference>
<dbReference type="GO" id="GO:0019684">
    <property type="term" value="P:photosynthesis, light reaction"/>
    <property type="evidence" value="ECO:0007669"/>
    <property type="project" value="UniProtKB-UniRule"/>
</dbReference>
<dbReference type="Gene3D" id="1.20.58.1610">
    <property type="entry name" value="NADH:ubiquinone/plastoquinone oxidoreductase, chain 3"/>
    <property type="match status" value="1"/>
</dbReference>
<dbReference type="HAMAP" id="MF_01394">
    <property type="entry name" value="NDH1_NuoA"/>
    <property type="match status" value="1"/>
</dbReference>
<dbReference type="InterPro" id="IPR023043">
    <property type="entry name" value="NAD(P)H_OxRDtase_bac/plastid"/>
</dbReference>
<dbReference type="InterPro" id="IPR000440">
    <property type="entry name" value="NADH_UbQ/plastoQ_OxRdtase_su3"/>
</dbReference>
<dbReference type="InterPro" id="IPR038430">
    <property type="entry name" value="NDAH_ubi_oxred_su3_sf"/>
</dbReference>
<dbReference type="PANTHER" id="PTHR11058">
    <property type="entry name" value="NADH-UBIQUINONE OXIDOREDUCTASE CHAIN 3"/>
    <property type="match status" value="1"/>
</dbReference>
<dbReference type="PANTHER" id="PTHR11058:SF9">
    <property type="entry name" value="NADH-UBIQUINONE OXIDOREDUCTASE CHAIN 3"/>
    <property type="match status" value="1"/>
</dbReference>
<dbReference type="Pfam" id="PF00507">
    <property type="entry name" value="Oxidored_q4"/>
    <property type="match status" value="1"/>
</dbReference>
<reference key="1">
    <citation type="journal article" date="2007" name="PLoS Genet.">
        <title>Patterns and implications of gene gain and loss in the evolution of Prochlorococcus.</title>
        <authorList>
            <person name="Kettler G.C."/>
            <person name="Martiny A.C."/>
            <person name="Huang K."/>
            <person name="Zucker J."/>
            <person name="Coleman M.L."/>
            <person name="Rodrigue S."/>
            <person name="Chen F."/>
            <person name="Lapidus A."/>
            <person name="Ferriera S."/>
            <person name="Johnson J."/>
            <person name="Steglich C."/>
            <person name="Church G.M."/>
            <person name="Richardson P."/>
            <person name="Chisholm S.W."/>
        </authorList>
    </citation>
    <scope>NUCLEOTIDE SEQUENCE [LARGE SCALE GENOMIC DNA]</scope>
    <source>
        <strain>AS9601</strain>
    </source>
</reference>
<evidence type="ECO:0000255" key="1">
    <source>
        <dbReference type="HAMAP-Rule" id="MF_01394"/>
    </source>
</evidence>